<name>RM36_MOUSE</name>
<proteinExistence type="inferred from homology"/>
<sequence>MAALLVRSVVASVVDPFLHLSRLAVKPRVFSSFLLGTLPRAKPCAEVRSVLCGRPLPTLLPSLGFKTKGVIKKRCKDCYKVKRRGRWFILCKTNPKHKQRQM</sequence>
<feature type="transit peptide" description="Mitochondrion" evidence="2">
    <location>
        <begin position="1"/>
        <end status="unknown"/>
    </location>
</feature>
<feature type="chain" id="PRO_0000030530" description="Large ribosomal subunit protein bL36m">
    <location>
        <begin status="unknown"/>
        <end position="102"/>
    </location>
</feature>
<gene>
    <name type="primary">Mrpl36</name>
</gene>
<accession>Q99N90</accession>
<accession>Q3V2T6</accession>
<organism>
    <name type="scientific">Mus musculus</name>
    <name type="common">Mouse</name>
    <dbReference type="NCBI Taxonomy" id="10090"/>
    <lineage>
        <taxon>Eukaryota</taxon>
        <taxon>Metazoa</taxon>
        <taxon>Chordata</taxon>
        <taxon>Craniata</taxon>
        <taxon>Vertebrata</taxon>
        <taxon>Euteleostomi</taxon>
        <taxon>Mammalia</taxon>
        <taxon>Eutheria</taxon>
        <taxon>Euarchontoglires</taxon>
        <taxon>Glires</taxon>
        <taxon>Rodentia</taxon>
        <taxon>Myomorpha</taxon>
        <taxon>Muroidea</taxon>
        <taxon>Muridae</taxon>
        <taxon>Murinae</taxon>
        <taxon>Mus</taxon>
        <taxon>Mus</taxon>
    </lineage>
</organism>
<protein>
    <recommendedName>
        <fullName evidence="3">Large ribosomal subunit protein bL36m</fullName>
    </recommendedName>
    <alternativeName>
        <fullName>39S ribosomal protein L36, mitochondrial</fullName>
        <shortName>L36mt</shortName>
        <shortName>MRP-L36</shortName>
    </alternativeName>
</protein>
<comment type="subunit">
    <text evidence="1">Component of the mitochondrial ribosome large subunit (39S) which comprises a 16S rRNA and about 50 distinct proteins.</text>
</comment>
<comment type="subcellular location">
    <subcellularLocation>
        <location evidence="1">Mitochondrion</location>
    </subcellularLocation>
</comment>
<comment type="similarity">
    <text evidence="3">Belongs to the bacterial ribosomal protein bL36 family.</text>
</comment>
<dbReference type="EMBL" id="AB049655">
    <property type="protein sequence ID" value="BAB40860.1"/>
    <property type="molecule type" value="mRNA"/>
</dbReference>
<dbReference type="EMBL" id="AK075780">
    <property type="protein sequence ID" value="BAC35954.1"/>
    <property type="molecule type" value="mRNA"/>
</dbReference>
<dbReference type="EMBL" id="AK131597">
    <property type="protein sequence ID" value="BAE20708.1"/>
    <property type="molecule type" value="mRNA"/>
</dbReference>
<dbReference type="EMBL" id="AK131601">
    <property type="protein sequence ID" value="BAE20711.1"/>
    <property type="molecule type" value="mRNA"/>
</dbReference>
<dbReference type="EMBL" id="AK131604">
    <property type="protein sequence ID" value="BAE20714.1"/>
    <property type="molecule type" value="mRNA"/>
</dbReference>
<dbReference type="EMBL" id="AK160778">
    <property type="protein sequence ID" value="BAE36002.1"/>
    <property type="molecule type" value="mRNA"/>
</dbReference>
<dbReference type="EMBL" id="BC009166">
    <property type="protein sequence ID" value="AAH09166.1"/>
    <property type="molecule type" value="mRNA"/>
</dbReference>
<dbReference type="CCDS" id="CCDS26631.1"/>
<dbReference type="RefSeq" id="NP_444393.1">
    <property type="nucleotide sequence ID" value="NM_053163.1"/>
</dbReference>
<dbReference type="SMR" id="Q99N90"/>
<dbReference type="BioGRID" id="220438">
    <property type="interactions" value="1"/>
</dbReference>
<dbReference type="ComplexPortal" id="CPX-5302">
    <property type="entry name" value="39S mitochondrial large ribosomal subunit"/>
</dbReference>
<dbReference type="FunCoup" id="Q99N90">
    <property type="interactions" value="668"/>
</dbReference>
<dbReference type="STRING" id="10090.ENSMUSP00000022098"/>
<dbReference type="PaxDb" id="10090-ENSMUSP00000022098"/>
<dbReference type="Antibodypedia" id="22352">
    <property type="antibodies" value="63 antibodies from 20 providers"/>
</dbReference>
<dbReference type="DNASU" id="94066"/>
<dbReference type="Ensembl" id="ENSMUST00000022098.10">
    <property type="protein sequence ID" value="ENSMUSP00000022098.9"/>
    <property type="gene ID" value="ENSMUSG00000021607.10"/>
</dbReference>
<dbReference type="Ensembl" id="ENSMUST00000221730.2">
    <property type="protein sequence ID" value="ENSMUSP00000152226.2"/>
    <property type="gene ID" value="ENSMUSG00000021607.10"/>
</dbReference>
<dbReference type="Ensembl" id="ENSMUST00000222030.2">
    <property type="protein sequence ID" value="ENSMUSP00000152607.2"/>
    <property type="gene ID" value="ENSMUSG00000021607.10"/>
</dbReference>
<dbReference type="GeneID" id="94066"/>
<dbReference type="KEGG" id="mmu:94066"/>
<dbReference type="UCSC" id="uc007rdi.1">
    <property type="organism name" value="mouse"/>
</dbReference>
<dbReference type="AGR" id="MGI:2137228"/>
<dbReference type="CTD" id="64979"/>
<dbReference type="MGI" id="MGI:2137228">
    <property type="gene designation" value="Mrpl36"/>
</dbReference>
<dbReference type="VEuPathDB" id="HostDB:ENSMUSG00000021607"/>
<dbReference type="eggNOG" id="KOG4122">
    <property type="taxonomic scope" value="Eukaryota"/>
</dbReference>
<dbReference type="GeneTree" id="ENSGT00390000010866"/>
<dbReference type="HOGENOM" id="CLU_135723_0_0_1"/>
<dbReference type="InParanoid" id="Q99N90"/>
<dbReference type="OMA" id="CATNPRH"/>
<dbReference type="OrthoDB" id="10265903at2759"/>
<dbReference type="PhylomeDB" id="Q99N90"/>
<dbReference type="TreeFam" id="TF300275"/>
<dbReference type="Reactome" id="R-MMU-5389840">
    <property type="pathway name" value="Mitochondrial translation elongation"/>
</dbReference>
<dbReference type="Reactome" id="R-MMU-5419276">
    <property type="pathway name" value="Mitochondrial translation termination"/>
</dbReference>
<dbReference type="BioGRID-ORCS" id="94066">
    <property type="hits" value="22 hits in 80 CRISPR screens"/>
</dbReference>
<dbReference type="ChiTaRS" id="Mrpl36">
    <property type="organism name" value="mouse"/>
</dbReference>
<dbReference type="PRO" id="PR:Q99N90"/>
<dbReference type="Proteomes" id="UP000000589">
    <property type="component" value="Chromosome 13"/>
</dbReference>
<dbReference type="RNAct" id="Q99N90">
    <property type="molecule type" value="protein"/>
</dbReference>
<dbReference type="Bgee" id="ENSMUSG00000021607">
    <property type="expression patterns" value="Expressed in embryonic cell in blastocyst and 255 other cell types or tissues"/>
</dbReference>
<dbReference type="GO" id="GO:0005743">
    <property type="term" value="C:mitochondrial inner membrane"/>
    <property type="evidence" value="ECO:0000303"/>
    <property type="project" value="ComplexPortal"/>
</dbReference>
<dbReference type="GO" id="GO:0005762">
    <property type="term" value="C:mitochondrial large ribosomal subunit"/>
    <property type="evidence" value="ECO:0000250"/>
    <property type="project" value="UniProtKB"/>
</dbReference>
<dbReference type="GO" id="GO:0005739">
    <property type="term" value="C:mitochondrion"/>
    <property type="evidence" value="ECO:0007005"/>
    <property type="project" value="MGI"/>
</dbReference>
<dbReference type="GO" id="GO:0016604">
    <property type="term" value="C:nuclear body"/>
    <property type="evidence" value="ECO:0007669"/>
    <property type="project" value="Ensembl"/>
</dbReference>
<dbReference type="GO" id="GO:0003735">
    <property type="term" value="F:structural constituent of ribosome"/>
    <property type="evidence" value="ECO:0000266"/>
    <property type="project" value="MGI"/>
</dbReference>
<dbReference type="GO" id="GO:0032543">
    <property type="term" value="P:mitochondrial translation"/>
    <property type="evidence" value="ECO:0000303"/>
    <property type="project" value="ComplexPortal"/>
</dbReference>
<dbReference type="GO" id="GO:0006412">
    <property type="term" value="P:translation"/>
    <property type="evidence" value="ECO:0000266"/>
    <property type="project" value="MGI"/>
</dbReference>
<dbReference type="HAMAP" id="MF_00251">
    <property type="entry name" value="Ribosomal_bL36"/>
    <property type="match status" value="1"/>
</dbReference>
<dbReference type="InterPro" id="IPR052143">
    <property type="entry name" value="Mitoribosomal_bL36m"/>
</dbReference>
<dbReference type="InterPro" id="IPR000473">
    <property type="entry name" value="Ribosomal_bL36"/>
</dbReference>
<dbReference type="InterPro" id="IPR035977">
    <property type="entry name" value="Ribosomal_bL36_sp"/>
</dbReference>
<dbReference type="NCBIfam" id="TIGR01022">
    <property type="entry name" value="rpmJ_bact"/>
    <property type="match status" value="1"/>
</dbReference>
<dbReference type="PANTHER" id="PTHR46909">
    <property type="entry name" value="39S RIBOSOMAL PROTEIN L36, MITOCHONDRIAL"/>
    <property type="match status" value="1"/>
</dbReference>
<dbReference type="PANTHER" id="PTHR46909:SF1">
    <property type="entry name" value="LARGE RIBOSOMAL SUBUNIT PROTEIN BL36M"/>
    <property type="match status" value="1"/>
</dbReference>
<dbReference type="Pfam" id="PF00444">
    <property type="entry name" value="Ribosomal_L36"/>
    <property type="match status" value="1"/>
</dbReference>
<dbReference type="SUPFAM" id="SSF57840">
    <property type="entry name" value="Ribosomal protein L36"/>
    <property type="match status" value="1"/>
</dbReference>
<reference key="1">
    <citation type="journal article" date="2001" name="J. Biol. Chem.">
        <title>Structural compensation for the deficit of rRNA with proteins in the mammalian mitochondrial ribosome. Systematic analysis of protein components of the large ribosomal subunit from mammalian mitochondria.</title>
        <authorList>
            <person name="Suzuki T."/>
            <person name="Terasaki M."/>
            <person name="Takemoto-Hori C."/>
            <person name="Hanada T."/>
            <person name="Ueda T."/>
            <person name="Wada A."/>
            <person name="Watanabe K."/>
        </authorList>
    </citation>
    <scope>NUCLEOTIDE SEQUENCE [MRNA]</scope>
</reference>
<reference key="2">
    <citation type="journal article" date="2005" name="Science">
        <title>The transcriptional landscape of the mammalian genome.</title>
        <authorList>
            <person name="Carninci P."/>
            <person name="Kasukawa T."/>
            <person name="Katayama S."/>
            <person name="Gough J."/>
            <person name="Frith M.C."/>
            <person name="Maeda N."/>
            <person name="Oyama R."/>
            <person name="Ravasi T."/>
            <person name="Lenhard B."/>
            <person name="Wells C."/>
            <person name="Kodzius R."/>
            <person name="Shimokawa K."/>
            <person name="Bajic V.B."/>
            <person name="Brenner S.E."/>
            <person name="Batalov S."/>
            <person name="Forrest A.R."/>
            <person name="Zavolan M."/>
            <person name="Davis M.J."/>
            <person name="Wilming L.G."/>
            <person name="Aidinis V."/>
            <person name="Allen J.E."/>
            <person name="Ambesi-Impiombato A."/>
            <person name="Apweiler R."/>
            <person name="Aturaliya R.N."/>
            <person name="Bailey T.L."/>
            <person name="Bansal M."/>
            <person name="Baxter L."/>
            <person name="Beisel K.W."/>
            <person name="Bersano T."/>
            <person name="Bono H."/>
            <person name="Chalk A.M."/>
            <person name="Chiu K.P."/>
            <person name="Choudhary V."/>
            <person name="Christoffels A."/>
            <person name="Clutterbuck D.R."/>
            <person name="Crowe M.L."/>
            <person name="Dalla E."/>
            <person name="Dalrymple B.P."/>
            <person name="de Bono B."/>
            <person name="Della Gatta G."/>
            <person name="di Bernardo D."/>
            <person name="Down T."/>
            <person name="Engstrom P."/>
            <person name="Fagiolini M."/>
            <person name="Faulkner G."/>
            <person name="Fletcher C.F."/>
            <person name="Fukushima T."/>
            <person name="Furuno M."/>
            <person name="Futaki S."/>
            <person name="Gariboldi M."/>
            <person name="Georgii-Hemming P."/>
            <person name="Gingeras T.R."/>
            <person name="Gojobori T."/>
            <person name="Green R.E."/>
            <person name="Gustincich S."/>
            <person name="Harbers M."/>
            <person name="Hayashi Y."/>
            <person name="Hensch T.K."/>
            <person name="Hirokawa N."/>
            <person name="Hill D."/>
            <person name="Huminiecki L."/>
            <person name="Iacono M."/>
            <person name="Ikeo K."/>
            <person name="Iwama A."/>
            <person name="Ishikawa T."/>
            <person name="Jakt M."/>
            <person name="Kanapin A."/>
            <person name="Katoh M."/>
            <person name="Kawasawa Y."/>
            <person name="Kelso J."/>
            <person name="Kitamura H."/>
            <person name="Kitano H."/>
            <person name="Kollias G."/>
            <person name="Krishnan S.P."/>
            <person name="Kruger A."/>
            <person name="Kummerfeld S.K."/>
            <person name="Kurochkin I.V."/>
            <person name="Lareau L.F."/>
            <person name="Lazarevic D."/>
            <person name="Lipovich L."/>
            <person name="Liu J."/>
            <person name="Liuni S."/>
            <person name="McWilliam S."/>
            <person name="Madan Babu M."/>
            <person name="Madera M."/>
            <person name="Marchionni L."/>
            <person name="Matsuda H."/>
            <person name="Matsuzawa S."/>
            <person name="Miki H."/>
            <person name="Mignone F."/>
            <person name="Miyake S."/>
            <person name="Morris K."/>
            <person name="Mottagui-Tabar S."/>
            <person name="Mulder N."/>
            <person name="Nakano N."/>
            <person name="Nakauchi H."/>
            <person name="Ng P."/>
            <person name="Nilsson R."/>
            <person name="Nishiguchi S."/>
            <person name="Nishikawa S."/>
            <person name="Nori F."/>
            <person name="Ohara O."/>
            <person name="Okazaki Y."/>
            <person name="Orlando V."/>
            <person name="Pang K.C."/>
            <person name="Pavan W.J."/>
            <person name="Pavesi G."/>
            <person name="Pesole G."/>
            <person name="Petrovsky N."/>
            <person name="Piazza S."/>
            <person name="Reed J."/>
            <person name="Reid J.F."/>
            <person name="Ring B.Z."/>
            <person name="Ringwald M."/>
            <person name="Rost B."/>
            <person name="Ruan Y."/>
            <person name="Salzberg S.L."/>
            <person name="Sandelin A."/>
            <person name="Schneider C."/>
            <person name="Schoenbach C."/>
            <person name="Sekiguchi K."/>
            <person name="Semple C.A."/>
            <person name="Seno S."/>
            <person name="Sessa L."/>
            <person name="Sheng Y."/>
            <person name="Shibata Y."/>
            <person name="Shimada H."/>
            <person name="Shimada K."/>
            <person name="Silva D."/>
            <person name="Sinclair B."/>
            <person name="Sperling S."/>
            <person name="Stupka E."/>
            <person name="Sugiura K."/>
            <person name="Sultana R."/>
            <person name="Takenaka Y."/>
            <person name="Taki K."/>
            <person name="Tammoja K."/>
            <person name="Tan S.L."/>
            <person name="Tang S."/>
            <person name="Taylor M.S."/>
            <person name="Tegner J."/>
            <person name="Teichmann S.A."/>
            <person name="Ueda H.R."/>
            <person name="van Nimwegen E."/>
            <person name="Verardo R."/>
            <person name="Wei C.L."/>
            <person name="Yagi K."/>
            <person name="Yamanishi H."/>
            <person name="Zabarovsky E."/>
            <person name="Zhu S."/>
            <person name="Zimmer A."/>
            <person name="Hide W."/>
            <person name="Bult C."/>
            <person name="Grimmond S.M."/>
            <person name="Teasdale R.D."/>
            <person name="Liu E.T."/>
            <person name="Brusic V."/>
            <person name="Quackenbush J."/>
            <person name="Wahlestedt C."/>
            <person name="Mattick J.S."/>
            <person name="Hume D.A."/>
            <person name="Kai C."/>
            <person name="Sasaki D."/>
            <person name="Tomaru Y."/>
            <person name="Fukuda S."/>
            <person name="Kanamori-Katayama M."/>
            <person name="Suzuki M."/>
            <person name="Aoki J."/>
            <person name="Arakawa T."/>
            <person name="Iida J."/>
            <person name="Imamura K."/>
            <person name="Itoh M."/>
            <person name="Kato T."/>
            <person name="Kawaji H."/>
            <person name="Kawagashira N."/>
            <person name="Kawashima T."/>
            <person name="Kojima M."/>
            <person name="Kondo S."/>
            <person name="Konno H."/>
            <person name="Nakano K."/>
            <person name="Ninomiya N."/>
            <person name="Nishio T."/>
            <person name="Okada M."/>
            <person name="Plessy C."/>
            <person name="Shibata K."/>
            <person name="Shiraki T."/>
            <person name="Suzuki S."/>
            <person name="Tagami M."/>
            <person name="Waki K."/>
            <person name="Watahiki A."/>
            <person name="Okamura-Oho Y."/>
            <person name="Suzuki H."/>
            <person name="Kawai J."/>
            <person name="Hayashizaki Y."/>
        </authorList>
    </citation>
    <scope>NUCLEOTIDE SEQUENCE [LARGE SCALE MRNA]</scope>
    <source>
        <strain>C57BL/6J</strain>
        <tissue>Head</tissue>
        <tissue>Heart</tissue>
        <tissue>Pancreas</tissue>
    </source>
</reference>
<reference key="3">
    <citation type="journal article" date="2004" name="Genome Res.">
        <title>The status, quality, and expansion of the NIH full-length cDNA project: the Mammalian Gene Collection (MGC).</title>
        <authorList>
            <consortium name="The MGC Project Team"/>
        </authorList>
    </citation>
    <scope>NUCLEOTIDE SEQUENCE [LARGE SCALE MRNA]</scope>
    <source>
        <tissue>Mammary tumor</tissue>
    </source>
</reference>
<evidence type="ECO:0000250" key="1">
    <source>
        <dbReference type="UniProtKB" id="Q9P0J6"/>
    </source>
</evidence>
<evidence type="ECO:0000255" key="2"/>
<evidence type="ECO:0000305" key="3"/>
<keyword id="KW-0496">Mitochondrion</keyword>
<keyword id="KW-1185">Reference proteome</keyword>
<keyword id="KW-0687">Ribonucleoprotein</keyword>
<keyword id="KW-0689">Ribosomal protein</keyword>
<keyword id="KW-0809">Transit peptide</keyword>